<evidence type="ECO:0000255" key="1">
    <source>
        <dbReference type="HAMAP-Rule" id="MF_00031"/>
    </source>
</evidence>
<feature type="chain" id="PRO_1000002556" description="Holliday junction branch migration complex subunit RuvA">
    <location>
        <begin position="1"/>
        <end position="203"/>
    </location>
</feature>
<feature type="region of interest" description="Domain I" evidence="1">
    <location>
        <begin position="1"/>
        <end position="64"/>
    </location>
</feature>
<feature type="region of interest" description="Domain II" evidence="1">
    <location>
        <begin position="65"/>
        <end position="142"/>
    </location>
</feature>
<feature type="region of interest" description="Flexible linker" evidence="1">
    <location>
        <begin position="143"/>
        <end position="154"/>
    </location>
</feature>
<feature type="region of interest" description="Domain III" evidence="1">
    <location>
        <begin position="155"/>
        <end position="203"/>
    </location>
</feature>
<proteinExistence type="inferred from homology"/>
<protein>
    <recommendedName>
        <fullName evidence="1">Holliday junction branch migration complex subunit RuvA</fullName>
    </recommendedName>
</protein>
<organism>
    <name type="scientific">Shigella flexneri serotype 5b (strain 8401)</name>
    <dbReference type="NCBI Taxonomy" id="373384"/>
    <lineage>
        <taxon>Bacteria</taxon>
        <taxon>Pseudomonadati</taxon>
        <taxon>Pseudomonadota</taxon>
        <taxon>Gammaproteobacteria</taxon>
        <taxon>Enterobacterales</taxon>
        <taxon>Enterobacteriaceae</taxon>
        <taxon>Shigella</taxon>
    </lineage>
</organism>
<dbReference type="EMBL" id="CP000266">
    <property type="protein sequence ID" value="ABF04020.1"/>
    <property type="molecule type" value="Genomic_DNA"/>
</dbReference>
<dbReference type="RefSeq" id="WP_000580330.1">
    <property type="nucleotide sequence ID" value="NC_008258.1"/>
</dbReference>
<dbReference type="SMR" id="Q0T3U5"/>
<dbReference type="KEGG" id="sfv:SFV_1863"/>
<dbReference type="HOGENOM" id="CLU_087936_0_0_6"/>
<dbReference type="Proteomes" id="UP000000659">
    <property type="component" value="Chromosome"/>
</dbReference>
<dbReference type="GO" id="GO:0005737">
    <property type="term" value="C:cytoplasm"/>
    <property type="evidence" value="ECO:0007669"/>
    <property type="project" value="UniProtKB-SubCell"/>
</dbReference>
<dbReference type="GO" id="GO:0009379">
    <property type="term" value="C:Holliday junction helicase complex"/>
    <property type="evidence" value="ECO:0007669"/>
    <property type="project" value="InterPro"/>
</dbReference>
<dbReference type="GO" id="GO:0048476">
    <property type="term" value="C:Holliday junction resolvase complex"/>
    <property type="evidence" value="ECO:0007669"/>
    <property type="project" value="UniProtKB-UniRule"/>
</dbReference>
<dbReference type="GO" id="GO:0005524">
    <property type="term" value="F:ATP binding"/>
    <property type="evidence" value="ECO:0007669"/>
    <property type="project" value="InterPro"/>
</dbReference>
<dbReference type="GO" id="GO:0000400">
    <property type="term" value="F:four-way junction DNA binding"/>
    <property type="evidence" value="ECO:0007669"/>
    <property type="project" value="UniProtKB-UniRule"/>
</dbReference>
<dbReference type="GO" id="GO:0009378">
    <property type="term" value="F:four-way junction helicase activity"/>
    <property type="evidence" value="ECO:0007669"/>
    <property type="project" value="InterPro"/>
</dbReference>
<dbReference type="GO" id="GO:0006310">
    <property type="term" value="P:DNA recombination"/>
    <property type="evidence" value="ECO:0007669"/>
    <property type="project" value="UniProtKB-UniRule"/>
</dbReference>
<dbReference type="GO" id="GO:0006281">
    <property type="term" value="P:DNA repair"/>
    <property type="evidence" value="ECO:0007669"/>
    <property type="project" value="UniProtKB-UniRule"/>
</dbReference>
<dbReference type="CDD" id="cd14332">
    <property type="entry name" value="UBA_RuvA_C"/>
    <property type="match status" value="1"/>
</dbReference>
<dbReference type="FunFam" id="1.10.150.20:FF:000012">
    <property type="entry name" value="Holliday junction ATP-dependent DNA helicase RuvA"/>
    <property type="match status" value="1"/>
</dbReference>
<dbReference type="FunFam" id="1.10.8.10:FF:000008">
    <property type="entry name" value="Holliday junction ATP-dependent DNA helicase RuvA"/>
    <property type="match status" value="1"/>
</dbReference>
<dbReference type="FunFam" id="2.40.50.140:FF:000083">
    <property type="entry name" value="Holliday junction ATP-dependent DNA helicase RuvA"/>
    <property type="match status" value="1"/>
</dbReference>
<dbReference type="Gene3D" id="1.10.150.20">
    <property type="entry name" value="5' to 3' exonuclease, C-terminal subdomain"/>
    <property type="match status" value="1"/>
</dbReference>
<dbReference type="Gene3D" id="1.10.8.10">
    <property type="entry name" value="DNA helicase RuvA subunit, C-terminal domain"/>
    <property type="match status" value="1"/>
</dbReference>
<dbReference type="Gene3D" id="2.40.50.140">
    <property type="entry name" value="Nucleic acid-binding proteins"/>
    <property type="match status" value="1"/>
</dbReference>
<dbReference type="HAMAP" id="MF_00031">
    <property type="entry name" value="DNA_HJ_migration_RuvA"/>
    <property type="match status" value="1"/>
</dbReference>
<dbReference type="InterPro" id="IPR013849">
    <property type="entry name" value="DNA_helicase_Holl-junc_RuvA_I"/>
</dbReference>
<dbReference type="InterPro" id="IPR003583">
    <property type="entry name" value="Hlx-hairpin-Hlx_DNA-bd_motif"/>
</dbReference>
<dbReference type="InterPro" id="IPR012340">
    <property type="entry name" value="NA-bd_OB-fold"/>
</dbReference>
<dbReference type="InterPro" id="IPR000085">
    <property type="entry name" value="RuvA"/>
</dbReference>
<dbReference type="InterPro" id="IPR010994">
    <property type="entry name" value="RuvA_2-like"/>
</dbReference>
<dbReference type="InterPro" id="IPR011114">
    <property type="entry name" value="RuvA_C"/>
</dbReference>
<dbReference type="InterPro" id="IPR036267">
    <property type="entry name" value="RuvA_C_sf"/>
</dbReference>
<dbReference type="NCBIfam" id="TIGR00084">
    <property type="entry name" value="ruvA"/>
    <property type="match status" value="1"/>
</dbReference>
<dbReference type="Pfam" id="PF14520">
    <property type="entry name" value="HHH_5"/>
    <property type="match status" value="1"/>
</dbReference>
<dbReference type="Pfam" id="PF07499">
    <property type="entry name" value="RuvA_C"/>
    <property type="match status" value="1"/>
</dbReference>
<dbReference type="Pfam" id="PF01330">
    <property type="entry name" value="RuvA_N"/>
    <property type="match status" value="1"/>
</dbReference>
<dbReference type="SMART" id="SM00278">
    <property type="entry name" value="HhH1"/>
    <property type="match status" value="2"/>
</dbReference>
<dbReference type="SUPFAM" id="SSF46929">
    <property type="entry name" value="DNA helicase RuvA subunit, C-terminal domain"/>
    <property type="match status" value="1"/>
</dbReference>
<dbReference type="SUPFAM" id="SSF50249">
    <property type="entry name" value="Nucleic acid-binding proteins"/>
    <property type="match status" value="1"/>
</dbReference>
<dbReference type="SUPFAM" id="SSF47781">
    <property type="entry name" value="RuvA domain 2-like"/>
    <property type="match status" value="1"/>
</dbReference>
<accession>Q0T3U5</accession>
<keyword id="KW-0963">Cytoplasm</keyword>
<keyword id="KW-0227">DNA damage</keyword>
<keyword id="KW-0233">DNA recombination</keyword>
<keyword id="KW-0234">DNA repair</keyword>
<keyword id="KW-0238">DNA-binding</keyword>
<gene>
    <name evidence="1" type="primary">ruvA</name>
    <name type="ordered locus">SFV_1863</name>
</gene>
<sequence>MIGRLRGIIIEKQPPLVLIEVGGVGYEVHMPMTCFYELPEAGQEAIVFTHFVVREDAQLLYGFNNKQERTLFKELIKTNGVGPKLALAILSGMSAQQFVNAVEREEVGPLVKLPGIGKKTAERLIVEMKDRFKGLHGDLFTPAADLVLTSPASPATDDAEQEAVAALVALGYKPQEASRMVSKIARPDTSSETLIREALRAAL</sequence>
<comment type="function">
    <text evidence="1">The RuvA-RuvB-RuvC complex processes Holliday junction (HJ) DNA during genetic recombination and DNA repair, while the RuvA-RuvB complex plays an important role in the rescue of blocked DNA replication forks via replication fork reversal (RFR). RuvA specifically binds to HJ cruciform DNA, conferring on it an open structure. The RuvB hexamer acts as an ATP-dependent pump, pulling dsDNA into and through the RuvAB complex. HJ branch migration allows RuvC to scan DNA until it finds its consensus sequence, where it cleaves and resolves the cruciform DNA.</text>
</comment>
<comment type="subunit">
    <text evidence="1">Homotetramer. Forms an RuvA(8)-RuvB(12)-Holliday junction (HJ) complex. HJ DNA is sandwiched between 2 RuvA tetramers; dsDNA enters through RuvA and exits via RuvB. An RuvB hexamer assembles on each DNA strand where it exits the tetramer. Each RuvB hexamer is contacted by two RuvA subunits (via domain III) on 2 adjacent RuvB subunits; this complex drives branch migration. In the full resolvosome a probable DNA-RuvA(4)-RuvB(12)-RuvC(2) complex forms which resolves the HJ.</text>
</comment>
<comment type="subcellular location">
    <subcellularLocation>
        <location evidence="1">Cytoplasm</location>
    </subcellularLocation>
</comment>
<comment type="domain">
    <text evidence="1">Has three domains with a flexible linker between the domains II and III and assumes an 'L' shape. Domain III is highly mobile and contacts RuvB.</text>
</comment>
<comment type="similarity">
    <text evidence="1">Belongs to the RuvA family.</text>
</comment>
<reference key="1">
    <citation type="journal article" date="2006" name="BMC Genomics">
        <title>Complete genome sequence of Shigella flexneri 5b and comparison with Shigella flexneri 2a.</title>
        <authorList>
            <person name="Nie H."/>
            <person name="Yang F."/>
            <person name="Zhang X."/>
            <person name="Yang J."/>
            <person name="Chen L."/>
            <person name="Wang J."/>
            <person name="Xiong Z."/>
            <person name="Peng J."/>
            <person name="Sun L."/>
            <person name="Dong J."/>
            <person name="Xue Y."/>
            <person name="Xu X."/>
            <person name="Chen S."/>
            <person name="Yao Z."/>
            <person name="Shen Y."/>
            <person name="Jin Q."/>
        </authorList>
    </citation>
    <scope>NUCLEOTIDE SEQUENCE [LARGE SCALE GENOMIC DNA]</scope>
    <source>
        <strain>8401</strain>
    </source>
</reference>
<name>RUVA_SHIF8</name>